<gene>
    <name evidence="3" type="primary">Atp5pf</name>
    <name type="synonym">Atp5j</name>
</gene>
<accession>P97450</accession>
<comment type="function">
    <text evidence="2 3 4">Subunit F6, of the mitochondrial membrane ATP synthase complex (F(1)F(0) ATP synthase or Complex V) that produces ATP from ADP in the presence of a proton gradient across the membrane which is generated by electron transport complexes of the respiratory chain. ATP synthase complex consist of a soluble F(1) head domain - the catalytic core - and a membrane F(1) domain - the membrane proton channel. These two domains are linked by a central stalk rotating inside the F(1) region and a stationary peripheral stalk. During catalysis, ATP synthesis in the catalytic domain of F(1) is coupled via a rotary mechanism of the central stalk subunits to proton translocation (By similarity). In vivo, can only synthesize ATP although its ATP hydrolase activity can be activated artificially in vitro (By similarity). Part of the complex F(0) domain (By similarity). Part of the complex F(0) domain and the peripheric stalk, which acts as a stator to hold the catalytic alpha(3)beta(3) subcomplex and subunit a/ATP6 static relative to the rotary elements (By similarity).</text>
</comment>
<comment type="subunit">
    <text evidence="3">Component of the ATP synthase complex composed at least of ATP5F1A/subunit alpha, ATP5F1B/subunit beta, ATP5MC1/subunit c (homooctomer), MT-ATP6/subunit a, MT-ATP8/subunit 8, ATP5ME/subunit e, ATP5MF/subunit f, ATP5MG/subunit g, ATP5MK/subunit k, ATP5MJ/subunit j, ATP5F1C/subunit gamma, ATP5F1D/subunit delta, ATP5F1E/subunit epsilon, ATP5PF/subunit F6, ATP5PB/subunit b, ATP5PD/subunit d, ATP5PO/subunit OSCP. ATP synthase complex consists of a soluble F(1) head domain (subunits alpha(3) and beta(3)) - the catalytic core - and a membrane F(0) domain - the membrane proton channel (subunits c, a, 8, e, f, g, k and j). These two domains are linked by a central stalk (subunits gamma, delta, and epsilon) rotating inside the F1 region and a stationary peripheral stalk (subunits F6, b, d, and OSCP).</text>
</comment>
<comment type="subcellular location">
    <subcellularLocation>
        <location>Mitochondrion</location>
    </subcellularLocation>
    <subcellularLocation>
        <location>Mitochondrion inner membrane</location>
    </subcellularLocation>
</comment>
<comment type="similarity">
    <text evidence="6">Belongs to the eukaryotic ATPase subunit F6 family.</text>
</comment>
<sequence length="108" mass="12496">MVLQRIFRLSSVLRSAVSVHLKRNIGVTAVAFNKELDPVQKLFVDKIREYKSKRQASGGPVDIGPEYQQDLDRELYKLKQMYGKGEMDTFPTFKFDDPKFEVIDKPQS</sequence>
<reference key="1">
    <citation type="submission" date="1996-11" db="EMBL/GenBank/DDBJ databases">
        <authorList>
            <person name="Rocha D."/>
            <person name="Anderson E."/>
            <person name="Botcherby M."/>
            <person name="Jordan B."/>
            <person name="Carrier A."/>
        </authorList>
    </citation>
    <scope>NUCLEOTIDE SEQUENCE [MRNA]</scope>
    <source>
        <strain>C57BL/6J</strain>
    </source>
</reference>
<reference key="2">
    <citation type="journal article" date="2005" name="Science">
        <title>The transcriptional landscape of the mammalian genome.</title>
        <authorList>
            <person name="Carninci P."/>
            <person name="Kasukawa T."/>
            <person name="Katayama S."/>
            <person name="Gough J."/>
            <person name="Frith M.C."/>
            <person name="Maeda N."/>
            <person name="Oyama R."/>
            <person name="Ravasi T."/>
            <person name="Lenhard B."/>
            <person name="Wells C."/>
            <person name="Kodzius R."/>
            <person name="Shimokawa K."/>
            <person name="Bajic V.B."/>
            <person name="Brenner S.E."/>
            <person name="Batalov S."/>
            <person name="Forrest A.R."/>
            <person name="Zavolan M."/>
            <person name="Davis M.J."/>
            <person name="Wilming L.G."/>
            <person name="Aidinis V."/>
            <person name="Allen J.E."/>
            <person name="Ambesi-Impiombato A."/>
            <person name="Apweiler R."/>
            <person name="Aturaliya R.N."/>
            <person name="Bailey T.L."/>
            <person name="Bansal M."/>
            <person name="Baxter L."/>
            <person name="Beisel K.W."/>
            <person name="Bersano T."/>
            <person name="Bono H."/>
            <person name="Chalk A.M."/>
            <person name="Chiu K.P."/>
            <person name="Choudhary V."/>
            <person name="Christoffels A."/>
            <person name="Clutterbuck D.R."/>
            <person name="Crowe M.L."/>
            <person name="Dalla E."/>
            <person name="Dalrymple B.P."/>
            <person name="de Bono B."/>
            <person name="Della Gatta G."/>
            <person name="di Bernardo D."/>
            <person name="Down T."/>
            <person name="Engstrom P."/>
            <person name="Fagiolini M."/>
            <person name="Faulkner G."/>
            <person name="Fletcher C.F."/>
            <person name="Fukushima T."/>
            <person name="Furuno M."/>
            <person name="Futaki S."/>
            <person name="Gariboldi M."/>
            <person name="Georgii-Hemming P."/>
            <person name="Gingeras T.R."/>
            <person name="Gojobori T."/>
            <person name="Green R.E."/>
            <person name="Gustincich S."/>
            <person name="Harbers M."/>
            <person name="Hayashi Y."/>
            <person name="Hensch T.K."/>
            <person name="Hirokawa N."/>
            <person name="Hill D."/>
            <person name="Huminiecki L."/>
            <person name="Iacono M."/>
            <person name="Ikeo K."/>
            <person name="Iwama A."/>
            <person name="Ishikawa T."/>
            <person name="Jakt M."/>
            <person name="Kanapin A."/>
            <person name="Katoh M."/>
            <person name="Kawasawa Y."/>
            <person name="Kelso J."/>
            <person name="Kitamura H."/>
            <person name="Kitano H."/>
            <person name="Kollias G."/>
            <person name="Krishnan S.P."/>
            <person name="Kruger A."/>
            <person name="Kummerfeld S.K."/>
            <person name="Kurochkin I.V."/>
            <person name="Lareau L.F."/>
            <person name="Lazarevic D."/>
            <person name="Lipovich L."/>
            <person name="Liu J."/>
            <person name="Liuni S."/>
            <person name="McWilliam S."/>
            <person name="Madan Babu M."/>
            <person name="Madera M."/>
            <person name="Marchionni L."/>
            <person name="Matsuda H."/>
            <person name="Matsuzawa S."/>
            <person name="Miki H."/>
            <person name="Mignone F."/>
            <person name="Miyake S."/>
            <person name="Morris K."/>
            <person name="Mottagui-Tabar S."/>
            <person name="Mulder N."/>
            <person name="Nakano N."/>
            <person name="Nakauchi H."/>
            <person name="Ng P."/>
            <person name="Nilsson R."/>
            <person name="Nishiguchi S."/>
            <person name="Nishikawa S."/>
            <person name="Nori F."/>
            <person name="Ohara O."/>
            <person name="Okazaki Y."/>
            <person name="Orlando V."/>
            <person name="Pang K.C."/>
            <person name="Pavan W.J."/>
            <person name="Pavesi G."/>
            <person name="Pesole G."/>
            <person name="Petrovsky N."/>
            <person name="Piazza S."/>
            <person name="Reed J."/>
            <person name="Reid J.F."/>
            <person name="Ring B.Z."/>
            <person name="Ringwald M."/>
            <person name="Rost B."/>
            <person name="Ruan Y."/>
            <person name="Salzberg S.L."/>
            <person name="Sandelin A."/>
            <person name="Schneider C."/>
            <person name="Schoenbach C."/>
            <person name="Sekiguchi K."/>
            <person name="Semple C.A."/>
            <person name="Seno S."/>
            <person name="Sessa L."/>
            <person name="Sheng Y."/>
            <person name="Shibata Y."/>
            <person name="Shimada H."/>
            <person name="Shimada K."/>
            <person name="Silva D."/>
            <person name="Sinclair B."/>
            <person name="Sperling S."/>
            <person name="Stupka E."/>
            <person name="Sugiura K."/>
            <person name="Sultana R."/>
            <person name="Takenaka Y."/>
            <person name="Taki K."/>
            <person name="Tammoja K."/>
            <person name="Tan S.L."/>
            <person name="Tang S."/>
            <person name="Taylor M.S."/>
            <person name="Tegner J."/>
            <person name="Teichmann S.A."/>
            <person name="Ueda H.R."/>
            <person name="van Nimwegen E."/>
            <person name="Verardo R."/>
            <person name="Wei C.L."/>
            <person name="Yagi K."/>
            <person name="Yamanishi H."/>
            <person name="Zabarovsky E."/>
            <person name="Zhu S."/>
            <person name="Zimmer A."/>
            <person name="Hide W."/>
            <person name="Bult C."/>
            <person name="Grimmond S.M."/>
            <person name="Teasdale R.D."/>
            <person name="Liu E.T."/>
            <person name="Brusic V."/>
            <person name="Quackenbush J."/>
            <person name="Wahlestedt C."/>
            <person name="Mattick J.S."/>
            <person name="Hume D.A."/>
            <person name="Kai C."/>
            <person name="Sasaki D."/>
            <person name="Tomaru Y."/>
            <person name="Fukuda S."/>
            <person name="Kanamori-Katayama M."/>
            <person name="Suzuki M."/>
            <person name="Aoki J."/>
            <person name="Arakawa T."/>
            <person name="Iida J."/>
            <person name="Imamura K."/>
            <person name="Itoh M."/>
            <person name="Kato T."/>
            <person name="Kawaji H."/>
            <person name="Kawagashira N."/>
            <person name="Kawashima T."/>
            <person name="Kojima M."/>
            <person name="Kondo S."/>
            <person name="Konno H."/>
            <person name="Nakano K."/>
            <person name="Ninomiya N."/>
            <person name="Nishio T."/>
            <person name="Okada M."/>
            <person name="Plessy C."/>
            <person name="Shibata K."/>
            <person name="Shiraki T."/>
            <person name="Suzuki S."/>
            <person name="Tagami M."/>
            <person name="Waki K."/>
            <person name="Watahiki A."/>
            <person name="Okamura-Oho Y."/>
            <person name="Suzuki H."/>
            <person name="Kawai J."/>
            <person name="Hayashizaki Y."/>
        </authorList>
    </citation>
    <scope>NUCLEOTIDE SEQUENCE [LARGE SCALE MRNA]</scope>
    <source>
        <strain>C57BL/6J</strain>
    </source>
</reference>
<reference key="3">
    <citation type="journal article" date="2004" name="Genome Res.">
        <title>The status, quality, and expansion of the NIH full-length cDNA project: the Mammalian Gene Collection (MGC).</title>
        <authorList>
            <consortium name="The MGC Project Team"/>
        </authorList>
    </citation>
    <scope>NUCLEOTIDE SEQUENCE [LARGE SCALE MRNA]</scope>
    <source>
        <strain>FVB/N</strain>
        <tissue>Colon</tissue>
    </source>
</reference>
<reference key="4">
    <citation type="journal article" date="2010" name="Cell">
        <title>A tissue-specific atlas of mouse protein phosphorylation and expression.</title>
        <authorList>
            <person name="Huttlin E.L."/>
            <person name="Jedrychowski M.P."/>
            <person name="Elias J.E."/>
            <person name="Goswami T."/>
            <person name="Rad R."/>
            <person name="Beausoleil S.A."/>
            <person name="Villen J."/>
            <person name="Haas W."/>
            <person name="Sowa M.E."/>
            <person name="Gygi S.P."/>
        </authorList>
    </citation>
    <scope>IDENTIFICATION BY MASS SPECTROMETRY [LARGE SCALE ANALYSIS]</scope>
    <source>
        <tissue>Brain</tissue>
        <tissue>Brown adipose tissue</tissue>
        <tissue>Heart</tissue>
        <tissue>Kidney</tissue>
        <tissue>Liver</tissue>
        <tissue>Lung</tissue>
        <tissue>Pancreas</tissue>
        <tissue>Spleen</tissue>
        <tissue>Testis</tissue>
    </source>
</reference>
<reference key="5">
    <citation type="journal article" date="2013" name="Mol. Cell">
        <title>SIRT5-mediated lysine desuccinylation impacts diverse metabolic pathways.</title>
        <authorList>
            <person name="Park J."/>
            <person name="Chen Y."/>
            <person name="Tishkoff D.X."/>
            <person name="Peng C."/>
            <person name="Tan M."/>
            <person name="Dai L."/>
            <person name="Xie Z."/>
            <person name="Zhang Y."/>
            <person name="Zwaans B.M."/>
            <person name="Skinner M.E."/>
            <person name="Lombard D.B."/>
            <person name="Zhao Y."/>
        </authorList>
    </citation>
    <scope>SUCCINYLATION [LARGE SCALE ANALYSIS] AT LYS-84; LYS-94 AND LYS-99</scope>
    <scope>IDENTIFICATION BY MASS SPECTROMETRY [LARGE SCALE ANALYSIS]</scope>
    <source>
        <tissue>Liver</tissue>
    </source>
</reference>
<reference key="6">
    <citation type="journal article" date="2013" name="Proc. Natl. Acad. Sci. U.S.A.">
        <title>Label-free quantitative proteomics of the lysine acetylome in mitochondria identifies substrates of SIRT3 in metabolic pathways.</title>
        <authorList>
            <person name="Rardin M.J."/>
            <person name="Newman J.C."/>
            <person name="Held J.M."/>
            <person name="Cusack M.P."/>
            <person name="Sorensen D.J."/>
            <person name="Li B."/>
            <person name="Schilling B."/>
            <person name="Mooney S.D."/>
            <person name="Kahn C.R."/>
            <person name="Verdin E."/>
            <person name="Gibson B.W."/>
        </authorList>
    </citation>
    <scope>ACETYLATION [LARGE SCALE ANALYSIS] AT LYS-41; LYS-46; LYS-79; LYS-84; LYS-94; LYS-99 AND LYS-105</scope>
    <scope>IDENTIFICATION BY MASS SPECTROMETRY [LARGE SCALE ANALYSIS]</scope>
    <source>
        <tissue>Liver</tissue>
    </source>
</reference>
<evidence type="ECO:0000250" key="1"/>
<evidence type="ECO:0000250" key="2">
    <source>
        <dbReference type="UniProtKB" id="P02721"/>
    </source>
</evidence>
<evidence type="ECO:0000250" key="3">
    <source>
        <dbReference type="UniProtKB" id="P18859"/>
    </source>
</evidence>
<evidence type="ECO:0000250" key="4">
    <source>
        <dbReference type="UniProtKB" id="P19483"/>
    </source>
</evidence>
<evidence type="ECO:0000250" key="5">
    <source>
        <dbReference type="UniProtKB" id="P21571"/>
    </source>
</evidence>
<evidence type="ECO:0000305" key="6"/>
<evidence type="ECO:0007744" key="7">
    <source>
    </source>
</evidence>
<evidence type="ECO:0007744" key="8">
    <source>
    </source>
</evidence>
<proteinExistence type="evidence at protein level"/>
<name>ATP5J_MOUSE</name>
<feature type="transit peptide" description="Mitochondrion" evidence="1">
    <location>
        <begin position="1"/>
        <end position="32"/>
    </location>
</feature>
<feature type="chain" id="PRO_0000002529" description="ATP synthase peripheral stalk subunit F6, mitochondrial">
    <location>
        <begin position="33"/>
        <end position="108"/>
    </location>
</feature>
<feature type="modified residue" description="N6-acetyllysine" evidence="7">
    <location>
        <position position="41"/>
    </location>
</feature>
<feature type="modified residue" description="N6-acetyllysine" evidence="7">
    <location>
        <position position="46"/>
    </location>
</feature>
<feature type="modified residue" description="N6-acetyllysine" evidence="7">
    <location>
        <position position="79"/>
    </location>
</feature>
<feature type="modified residue" description="N6-acetyllysine; alternate" evidence="7">
    <location>
        <position position="84"/>
    </location>
</feature>
<feature type="modified residue" description="N6-succinyllysine; alternate" evidence="8">
    <location>
        <position position="84"/>
    </location>
</feature>
<feature type="modified residue" description="N6-acetyllysine; alternate" evidence="7">
    <location>
        <position position="94"/>
    </location>
</feature>
<feature type="modified residue" description="N6-succinyllysine; alternate" evidence="8">
    <location>
        <position position="94"/>
    </location>
</feature>
<feature type="modified residue" description="N6-acetyllysine; alternate" evidence="7">
    <location>
        <position position="99"/>
    </location>
</feature>
<feature type="modified residue" description="N6-succinyllysine; alternate" evidence="8">
    <location>
        <position position="99"/>
    </location>
</feature>
<feature type="modified residue" description="N6-acetyllysine" evidence="7">
    <location>
        <position position="105"/>
    </location>
</feature>
<feature type="modified residue" description="Phosphoserine" evidence="5">
    <location>
        <position position="108"/>
    </location>
</feature>
<protein>
    <recommendedName>
        <fullName evidence="6">ATP synthase peripheral stalk subunit F6, mitochondrial</fullName>
        <shortName>ATPase subunit F6</shortName>
    </recommendedName>
    <alternativeName>
        <fullName evidence="6">ATP synthase peripheral stalk subunit F6</fullName>
    </alternativeName>
</protein>
<keyword id="KW-0007">Acetylation</keyword>
<keyword id="KW-0138">CF(0)</keyword>
<keyword id="KW-0375">Hydrogen ion transport</keyword>
<keyword id="KW-0406">Ion transport</keyword>
<keyword id="KW-0472">Membrane</keyword>
<keyword id="KW-0496">Mitochondrion</keyword>
<keyword id="KW-0999">Mitochondrion inner membrane</keyword>
<keyword id="KW-0597">Phosphoprotein</keyword>
<keyword id="KW-1185">Reference proteome</keyword>
<keyword id="KW-0809">Transit peptide</keyword>
<keyword id="KW-0813">Transport</keyword>
<dbReference type="EMBL" id="U77128">
    <property type="protein sequence ID" value="AAB19213.1"/>
    <property type="molecule type" value="mRNA"/>
</dbReference>
<dbReference type="EMBL" id="AK078484">
    <property type="protein sequence ID" value="BAC37301.1"/>
    <property type="molecule type" value="mRNA"/>
</dbReference>
<dbReference type="EMBL" id="BC010766">
    <property type="protein sequence ID" value="AAH10766.1"/>
    <property type="molecule type" value="mRNA"/>
</dbReference>
<dbReference type="CCDS" id="CCDS28283.1"/>
<dbReference type="PIR" id="PD0444">
    <property type="entry name" value="PD0444"/>
</dbReference>
<dbReference type="RefSeq" id="NP_001289142.1">
    <property type="nucleotide sequence ID" value="NM_001302213.2"/>
</dbReference>
<dbReference type="RefSeq" id="NP_001289143.1">
    <property type="nucleotide sequence ID" value="NM_001302214.2"/>
</dbReference>
<dbReference type="RefSeq" id="NP_001289144.1">
    <property type="nucleotide sequence ID" value="NM_001302215.2"/>
</dbReference>
<dbReference type="RefSeq" id="NP_001289145.1">
    <property type="nucleotide sequence ID" value="NM_001302216.2"/>
</dbReference>
<dbReference type="RefSeq" id="NP_001345428.1">
    <property type="nucleotide sequence ID" value="NM_001358499.2"/>
</dbReference>
<dbReference type="RefSeq" id="NP_001345429.1">
    <property type="nucleotide sequence ID" value="NM_001358500.2"/>
</dbReference>
<dbReference type="RefSeq" id="NP_001403518.1">
    <property type="nucleotide sequence ID" value="NM_001416589.1"/>
</dbReference>
<dbReference type="RefSeq" id="NP_001403520.1">
    <property type="nucleotide sequence ID" value="NM_001416591.1"/>
</dbReference>
<dbReference type="RefSeq" id="NP_001403521.1">
    <property type="nucleotide sequence ID" value="NM_001416592.1"/>
</dbReference>
<dbReference type="RefSeq" id="NP_001403522.1">
    <property type="nucleotide sequence ID" value="NM_001416593.1"/>
</dbReference>
<dbReference type="RefSeq" id="NP_001403523.1">
    <property type="nucleotide sequence ID" value="NM_001416594.1"/>
</dbReference>
<dbReference type="RefSeq" id="NP_001403524.1">
    <property type="nucleotide sequence ID" value="NM_001416595.1"/>
</dbReference>
<dbReference type="RefSeq" id="NP_001403526.1">
    <property type="nucleotide sequence ID" value="NM_001416597.1"/>
</dbReference>
<dbReference type="RefSeq" id="NP_001403527.1">
    <property type="nucleotide sequence ID" value="NM_001416598.2"/>
</dbReference>
<dbReference type="RefSeq" id="NP_001403529.1">
    <property type="nucleotide sequence ID" value="NM_001416600.1"/>
</dbReference>
<dbReference type="RefSeq" id="NP_001403530.1">
    <property type="nucleotide sequence ID" value="NM_001416601.1"/>
</dbReference>
<dbReference type="RefSeq" id="NP_058035.1">
    <property type="nucleotide sequence ID" value="NM_016755.4"/>
</dbReference>
<dbReference type="RefSeq" id="XP_006522939.1">
    <property type="nucleotide sequence ID" value="XM_006522876.2"/>
</dbReference>
<dbReference type="RefSeq" id="XP_006522940.1">
    <property type="nucleotide sequence ID" value="XM_006522877.3"/>
</dbReference>
<dbReference type="RefSeq" id="XP_011244394.1">
    <property type="nucleotide sequence ID" value="XM_011246092.2"/>
</dbReference>
<dbReference type="RefSeq" id="XP_030104798.1">
    <property type="nucleotide sequence ID" value="XM_030248938.2"/>
</dbReference>
<dbReference type="RefSeq" id="XP_036015646.1">
    <property type="nucleotide sequence ID" value="XM_036159753.1"/>
</dbReference>
<dbReference type="RefSeq" id="XP_036015647.1">
    <property type="nucleotide sequence ID" value="XM_036159754.1"/>
</dbReference>
<dbReference type="RefSeq" id="XP_036015648.1">
    <property type="nucleotide sequence ID" value="XM_036159755.1"/>
</dbReference>
<dbReference type="SMR" id="P97450"/>
<dbReference type="BioGRID" id="198258">
    <property type="interactions" value="59"/>
</dbReference>
<dbReference type="FunCoup" id="P97450">
    <property type="interactions" value="1487"/>
</dbReference>
<dbReference type="IntAct" id="P97450">
    <property type="interactions" value="2"/>
</dbReference>
<dbReference type="MINT" id="P97450"/>
<dbReference type="STRING" id="10090.ENSMUSP00000023608"/>
<dbReference type="GlyGen" id="P97450">
    <property type="glycosylation" value="2 sites, 1 O-linked glycan (2 sites)"/>
</dbReference>
<dbReference type="iPTMnet" id="P97450"/>
<dbReference type="PhosphoSitePlus" id="P97450"/>
<dbReference type="jPOST" id="P97450"/>
<dbReference type="PaxDb" id="10090-ENSMUSP00000023608"/>
<dbReference type="PeptideAtlas" id="P97450"/>
<dbReference type="ProteomicsDB" id="265180"/>
<dbReference type="Pumba" id="P97450"/>
<dbReference type="Antibodypedia" id="22308">
    <property type="antibodies" value="211 antibodies from 29 providers"/>
</dbReference>
<dbReference type="DNASU" id="11957"/>
<dbReference type="Ensembl" id="ENSMUST00000023608.14">
    <property type="protein sequence ID" value="ENSMUSP00000023608.8"/>
    <property type="gene ID" value="ENSMUSG00000022890.14"/>
</dbReference>
<dbReference type="Ensembl" id="ENSMUST00000114191.8">
    <property type="protein sequence ID" value="ENSMUSP00000109829.2"/>
    <property type="gene ID" value="ENSMUSG00000022890.14"/>
</dbReference>
<dbReference type="Ensembl" id="ENSMUST00000114193.8">
    <property type="protein sequence ID" value="ENSMUSP00000109831.2"/>
    <property type="gene ID" value="ENSMUSG00000022890.14"/>
</dbReference>
<dbReference type="GeneID" id="11957"/>
<dbReference type="KEGG" id="mmu:11957"/>
<dbReference type="UCSC" id="uc007zth.2">
    <property type="organism name" value="mouse"/>
</dbReference>
<dbReference type="AGR" id="MGI:107777"/>
<dbReference type="CTD" id="522"/>
<dbReference type="MGI" id="MGI:107777">
    <property type="gene designation" value="Atp5pf"/>
</dbReference>
<dbReference type="VEuPathDB" id="HostDB:ENSMUSG00000022890"/>
<dbReference type="eggNOG" id="KOG4634">
    <property type="taxonomic scope" value="Eukaryota"/>
</dbReference>
<dbReference type="GeneTree" id="ENSGT00390000008902"/>
<dbReference type="InParanoid" id="P97450"/>
<dbReference type="OMA" id="RRNIGMS"/>
<dbReference type="OrthoDB" id="8902296at2759"/>
<dbReference type="PhylomeDB" id="P97450"/>
<dbReference type="TreeFam" id="TF318998"/>
<dbReference type="Reactome" id="R-MMU-163210">
    <property type="pathway name" value="Formation of ATP by chemiosmotic coupling"/>
</dbReference>
<dbReference type="Reactome" id="R-MMU-8949613">
    <property type="pathway name" value="Cristae formation"/>
</dbReference>
<dbReference type="Reactome" id="R-MMU-9837999">
    <property type="pathway name" value="Mitochondrial protein degradation"/>
</dbReference>
<dbReference type="BioGRID-ORCS" id="11957">
    <property type="hits" value="19 hits in 78 CRISPR screens"/>
</dbReference>
<dbReference type="ChiTaRS" id="Atp5j">
    <property type="organism name" value="mouse"/>
</dbReference>
<dbReference type="PRO" id="PR:P97450"/>
<dbReference type="Proteomes" id="UP000000589">
    <property type="component" value="Chromosome 16"/>
</dbReference>
<dbReference type="RNAct" id="P97450">
    <property type="molecule type" value="protein"/>
</dbReference>
<dbReference type="Bgee" id="ENSMUSG00000022890">
    <property type="expression patterns" value="Expressed in right kidney and 284 other cell types or tissues"/>
</dbReference>
<dbReference type="ExpressionAtlas" id="P97450">
    <property type="expression patterns" value="baseline and differential"/>
</dbReference>
<dbReference type="GO" id="GO:0005743">
    <property type="term" value="C:mitochondrial inner membrane"/>
    <property type="evidence" value="ECO:0007005"/>
    <property type="project" value="MGI"/>
</dbReference>
<dbReference type="GO" id="GO:0005739">
    <property type="term" value="C:mitochondrion"/>
    <property type="evidence" value="ECO:0007005"/>
    <property type="project" value="MGI"/>
</dbReference>
<dbReference type="GO" id="GO:0045259">
    <property type="term" value="C:proton-transporting ATP synthase complex"/>
    <property type="evidence" value="ECO:0000250"/>
    <property type="project" value="UniProtKB"/>
</dbReference>
<dbReference type="GO" id="GO:0046933">
    <property type="term" value="F:proton-transporting ATP synthase activity, rotational mechanism"/>
    <property type="evidence" value="ECO:0007669"/>
    <property type="project" value="Ensembl"/>
</dbReference>
<dbReference type="GO" id="GO:0042776">
    <property type="term" value="P:proton motive force-driven mitochondrial ATP synthesis"/>
    <property type="evidence" value="ECO:0007669"/>
    <property type="project" value="Ensembl"/>
</dbReference>
<dbReference type="FunFam" id="1.10.246.110:FF:000001">
    <property type="entry name" value="ATP synthase-coupling factor 6, mitochondrial"/>
    <property type="match status" value="1"/>
</dbReference>
<dbReference type="Gene3D" id="1.10.246.110">
    <property type="entry name" value="Mitochondrial ATP synthase-coupling factor 6"/>
    <property type="match status" value="1"/>
</dbReference>
<dbReference type="InterPro" id="IPR008387">
    <property type="entry name" value="ATP_synth_f6_mt"/>
</dbReference>
<dbReference type="InterPro" id="IPR036204">
    <property type="entry name" value="ATP_synth_f6_sf_mt"/>
</dbReference>
<dbReference type="PANTHER" id="PTHR12441">
    <property type="entry name" value="ATP SYNTHASE COUPLING FACTOR 6, MITOCHONDRIAL"/>
    <property type="match status" value="1"/>
</dbReference>
<dbReference type="PANTHER" id="PTHR12441:SF10">
    <property type="entry name" value="ATP SYNTHASE-COUPLING FACTOR 6, MITOCHONDRIAL"/>
    <property type="match status" value="1"/>
</dbReference>
<dbReference type="Pfam" id="PF05511">
    <property type="entry name" value="ATP-synt_F6"/>
    <property type="match status" value="1"/>
</dbReference>
<dbReference type="PIRSF" id="PIRSF002455">
    <property type="entry name" value="ATP_synthase_coupling_factor_6"/>
    <property type="match status" value="1"/>
</dbReference>
<dbReference type="SUPFAM" id="SSF111357">
    <property type="entry name" value="Mitochondrial ATP synthase coupling factor 6"/>
    <property type="match status" value="1"/>
</dbReference>
<organism>
    <name type="scientific">Mus musculus</name>
    <name type="common">Mouse</name>
    <dbReference type="NCBI Taxonomy" id="10090"/>
    <lineage>
        <taxon>Eukaryota</taxon>
        <taxon>Metazoa</taxon>
        <taxon>Chordata</taxon>
        <taxon>Craniata</taxon>
        <taxon>Vertebrata</taxon>
        <taxon>Euteleostomi</taxon>
        <taxon>Mammalia</taxon>
        <taxon>Eutheria</taxon>
        <taxon>Euarchontoglires</taxon>
        <taxon>Glires</taxon>
        <taxon>Rodentia</taxon>
        <taxon>Myomorpha</taxon>
        <taxon>Muroidea</taxon>
        <taxon>Muridae</taxon>
        <taxon>Murinae</taxon>
        <taxon>Mus</taxon>
        <taxon>Mus</taxon>
    </lineage>
</organism>